<protein>
    <recommendedName>
        <fullName>Patatin group M-2</fullName>
        <ecNumber>3.1.1.-</ecNumber>
    </recommendedName>
</protein>
<proteinExistence type="evidence at transcript level"/>
<sequence length="386" mass="42651">MATTKSFLILFFMILATTSSTCAKLEKMVTVLSIDGGGIKGIIPAIILEFLEGQLQEVDNNKDARLADYFDVIGGTSTGGLLTAMITTPNENNRPFAAAKDIVPFYFEHGPHIFNYSGSIIGPMYDGKYLLQVLQEKLGETRVHQALTEVAISSFDIKTNKPVIFTKSNLAKSPELDAKMYDICYSTAAAPIYFPPHYFITHTSNGDIYEFNLVDGGVATVGDPALLSLSVATRLAQEDPAFSSIKSLDYKQMLLLSLGTGTNSEFDKTYTAQEAAKWGPLRWMLAIQQMTNAASSYMTDYYISTVFQARHSQNNYLRVQENALTGTTTEMDDASEANMELLVQVGETLLKKPVSKDSPETYEEALKRFAKLLSDRKKLRANKASY</sequence>
<dbReference type="EC" id="3.1.1.-"/>
<dbReference type="EMBL" id="DQ274486">
    <property type="protein sequence ID" value="ABC55686.1"/>
    <property type="molecule type" value="mRNA"/>
</dbReference>
<dbReference type="SMR" id="Q2MY52"/>
<dbReference type="InParanoid" id="Q2MY52"/>
<dbReference type="Proteomes" id="UP000011115">
    <property type="component" value="Unassembled WGS sequence"/>
</dbReference>
<dbReference type="ExpressionAtlas" id="Q2MY52">
    <property type="expression patterns" value="baseline"/>
</dbReference>
<dbReference type="GO" id="GO:0005773">
    <property type="term" value="C:vacuole"/>
    <property type="evidence" value="ECO:0007669"/>
    <property type="project" value="UniProtKB-SubCell"/>
</dbReference>
<dbReference type="GO" id="GO:0047372">
    <property type="term" value="F:monoacylglycerol lipase activity"/>
    <property type="evidence" value="ECO:0000318"/>
    <property type="project" value="GO_Central"/>
</dbReference>
<dbReference type="GO" id="GO:0045735">
    <property type="term" value="F:nutrient reservoir activity"/>
    <property type="evidence" value="ECO:0007669"/>
    <property type="project" value="UniProtKB-KW"/>
</dbReference>
<dbReference type="GO" id="GO:0004620">
    <property type="term" value="F:phospholipase activity"/>
    <property type="evidence" value="ECO:0000318"/>
    <property type="project" value="GO_Central"/>
</dbReference>
<dbReference type="GO" id="GO:0006952">
    <property type="term" value="P:defense response"/>
    <property type="evidence" value="ECO:0007669"/>
    <property type="project" value="UniProtKB-KW"/>
</dbReference>
<dbReference type="GO" id="GO:0016042">
    <property type="term" value="P:lipid catabolic process"/>
    <property type="evidence" value="ECO:0007669"/>
    <property type="project" value="UniProtKB-KW"/>
</dbReference>
<dbReference type="Gene3D" id="3.40.1090.10">
    <property type="entry name" value="Cytosolic phospholipase A2 catalytic domain"/>
    <property type="match status" value="1"/>
</dbReference>
<dbReference type="InterPro" id="IPR016035">
    <property type="entry name" value="Acyl_Trfase/lysoPLipase"/>
</dbReference>
<dbReference type="InterPro" id="IPR002641">
    <property type="entry name" value="PNPLA_dom"/>
</dbReference>
<dbReference type="PANTHER" id="PTHR32176:SF85">
    <property type="entry name" value="PATATIN GROUP D-2"/>
    <property type="match status" value="1"/>
</dbReference>
<dbReference type="PANTHER" id="PTHR32176">
    <property type="entry name" value="XYLOSE ISOMERASE"/>
    <property type="match status" value="1"/>
</dbReference>
<dbReference type="Pfam" id="PF01734">
    <property type="entry name" value="Patatin"/>
    <property type="match status" value="1"/>
</dbReference>
<dbReference type="SUPFAM" id="SSF52151">
    <property type="entry name" value="FabD/lysophospholipase-like"/>
    <property type="match status" value="1"/>
</dbReference>
<dbReference type="PROSITE" id="PS51635">
    <property type="entry name" value="PNPLA"/>
    <property type="match status" value="1"/>
</dbReference>
<organism>
    <name type="scientific">Solanum tuberosum</name>
    <name type="common">Potato</name>
    <dbReference type="NCBI Taxonomy" id="4113"/>
    <lineage>
        <taxon>Eukaryota</taxon>
        <taxon>Viridiplantae</taxon>
        <taxon>Streptophyta</taxon>
        <taxon>Embryophyta</taxon>
        <taxon>Tracheophyta</taxon>
        <taxon>Spermatophyta</taxon>
        <taxon>Magnoliopsida</taxon>
        <taxon>eudicotyledons</taxon>
        <taxon>Gunneridae</taxon>
        <taxon>Pentapetalae</taxon>
        <taxon>asterids</taxon>
        <taxon>lamiids</taxon>
        <taxon>Solanales</taxon>
        <taxon>Solanaceae</taxon>
        <taxon>Solanoideae</taxon>
        <taxon>Solaneae</taxon>
        <taxon>Solanum</taxon>
    </lineage>
</organism>
<evidence type="ECO:0000250" key="1"/>
<evidence type="ECO:0000255" key="2"/>
<evidence type="ECO:0000255" key="3">
    <source>
        <dbReference type="PROSITE-ProRule" id="PRU01161"/>
    </source>
</evidence>
<evidence type="ECO:0000269" key="4">
    <source>
    </source>
</evidence>
<evidence type="ECO:0000305" key="5"/>
<accession>Q2MY52</accession>
<name>PATM2_SOLTU</name>
<keyword id="KW-0175">Coiled coil</keyword>
<keyword id="KW-0325">Glycoprotein</keyword>
<keyword id="KW-0378">Hydrolase</keyword>
<keyword id="KW-0442">Lipid degradation</keyword>
<keyword id="KW-0443">Lipid metabolism</keyword>
<keyword id="KW-0611">Plant defense</keyword>
<keyword id="KW-1185">Reference proteome</keyword>
<keyword id="KW-0732">Signal</keyword>
<keyword id="KW-0758">Storage protein</keyword>
<keyword id="KW-0926">Vacuole</keyword>
<feature type="signal peptide" evidence="2">
    <location>
        <begin position="1"/>
        <end position="23"/>
    </location>
</feature>
<feature type="chain" id="PRO_0000296707" description="Patatin group M-2">
    <location>
        <begin position="24"/>
        <end position="386"/>
    </location>
</feature>
<feature type="domain" description="PNPLA" evidence="3">
    <location>
        <begin position="32"/>
        <end position="229"/>
    </location>
</feature>
<feature type="coiled-coil region" evidence="2">
    <location>
        <begin position="321"/>
        <end position="384"/>
    </location>
</feature>
<feature type="short sequence motif" description="GXGXXG" evidence="3">
    <location>
        <begin position="36"/>
        <end position="41"/>
    </location>
</feature>
<feature type="short sequence motif" description="GXSXG" evidence="3">
    <location>
        <begin position="75"/>
        <end position="79"/>
    </location>
</feature>
<feature type="short sequence motif" description="DGA/G" evidence="3">
    <location>
        <begin position="215"/>
        <end position="217"/>
    </location>
</feature>
<feature type="active site" description="Nucleophile" evidence="3">
    <location>
        <position position="77"/>
    </location>
</feature>
<feature type="active site" description="Proton acceptor" evidence="3">
    <location>
        <position position="215"/>
    </location>
</feature>
<feature type="glycosylation site" description="N-linked (GlcNAc...) asparagine" evidence="2">
    <location>
        <position position="115"/>
    </location>
</feature>
<comment type="function">
    <text evidence="1">Probable lipolytic acyl hydrolase (LAH), an activity which is thought to be involved in the response of tubers to pathogens.</text>
</comment>
<comment type="subcellular location">
    <subcellularLocation>
        <location evidence="1">Vacuole</location>
    </subcellularLocation>
</comment>
<comment type="tissue specificity">
    <text evidence="4">Tuber.</text>
</comment>
<comment type="developmental stage">
    <text evidence="4">Accumulates progressively during tuber formation from stolon.</text>
</comment>
<comment type="domain">
    <text>The nitrogen atoms of the two glycine residues in the GGXR motif define the oxyanion hole, and stabilize the oxyanion that forms during the nucleophilic attack by the catalytic serine during substrate cleavage.</text>
</comment>
<comment type="miscellaneous">
    <text>Patatin have a dual role as a somatic storage protein and as an enzyme involved in host resistance.</text>
</comment>
<comment type="similarity">
    <text evidence="5">Belongs to the patatin family.</text>
</comment>
<reference key="1">
    <citation type="journal article" date="2006" name="Genetics">
        <title>Structural diversity and differential transcription of the patatin multicopy gene family during potato tuber development.</title>
        <authorList>
            <person name="Stupar R.M."/>
            <person name="Beaubien K.A."/>
            <person name="Jin W."/>
            <person name="Song J."/>
            <person name="Lee M.-K."/>
            <person name="Wu C."/>
            <person name="Zhang H.-B."/>
            <person name="Han B."/>
            <person name="Jiang J."/>
        </authorList>
    </citation>
    <scope>NUCLEOTIDE SEQUENCE [MRNA]</scope>
    <scope>DEVELOPMENTAL STAGE</scope>
    <scope>TISSUE SPECIFICITY</scope>
    <source>
        <strain>cv. Kennebec</strain>
    </source>
</reference>